<dbReference type="EMBL" id="CR760716">
    <property type="protein sequence ID" value="CAJ82266.1"/>
    <property type="molecule type" value="mRNA"/>
</dbReference>
<dbReference type="EMBL" id="BC167281">
    <property type="protein sequence ID" value="AAI67281.1"/>
    <property type="molecule type" value="mRNA"/>
</dbReference>
<dbReference type="EMBL" id="BC170697">
    <property type="protein sequence ID" value="AAI70697.1"/>
    <property type="molecule type" value="mRNA"/>
</dbReference>
<dbReference type="EMBL" id="BC170699">
    <property type="protein sequence ID" value="AAI70699.1"/>
    <property type="molecule type" value="mRNA"/>
</dbReference>
<dbReference type="RefSeq" id="NP_001016553.1">
    <property type="nucleotide sequence ID" value="NM_001016553.2"/>
</dbReference>
<dbReference type="SMR" id="Q28HV5"/>
<dbReference type="FunCoup" id="Q28HV5">
    <property type="interactions" value="1126"/>
</dbReference>
<dbReference type="STRING" id="8364.ENSXETP00000049865"/>
<dbReference type="PaxDb" id="8364-ENSXETP00000047441"/>
<dbReference type="GeneID" id="549307"/>
<dbReference type="KEGG" id="xtr:549307"/>
<dbReference type="AGR" id="Xenbase:XB-GENE-999449"/>
<dbReference type="CTD" id="93380"/>
<dbReference type="Xenbase" id="XB-GENE-999449">
    <property type="gene designation" value="mmgt1"/>
</dbReference>
<dbReference type="eggNOG" id="KOG3918">
    <property type="taxonomic scope" value="Eukaryota"/>
</dbReference>
<dbReference type="HOGENOM" id="CLU_122437_1_0_1"/>
<dbReference type="InParanoid" id="Q28HV5"/>
<dbReference type="OMA" id="HRGRVMF"/>
<dbReference type="OrthoDB" id="44756at2759"/>
<dbReference type="PhylomeDB" id="Q28HV5"/>
<dbReference type="TreeFam" id="TF323267"/>
<dbReference type="Proteomes" id="UP000008143">
    <property type="component" value="Chromosome 8"/>
</dbReference>
<dbReference type="Bgee" id="ENSXETG00000024459">
    <property type="expression patterns" value="Expressed in egg cell and 14 other cell types or tissues"/>
</dbReference>
<dbReference type="GO" id="GO:0005769">
    <property type="term" value="C:early endosome"/>
    <property type="evidence" value="ECO:0000250"/>
    <property type="project" value="UniProtKB"/>
</dbReference>
<dbReference type="GO" id="GO:0031901">
    <property type="term" value="C:early endosome membrane"/>
    <property type="evidence" value="ECO:0007669"/>
    <property type="project" value="UniProtKB-SubCell"/>
</dbReference>
<dbReference type="GO" id="GO:0072546">
    <property type="term" value="C:EMC complex"/>
    <property type="evidence" value="ECO:0000250"/>
    <property type="project" value="UniProtKB"/>
</dbReference>
<dbReference type="GO" id="GO:0005789">
    <property type="term" value="C:endoplasmic reticulum membrane"/>
    <property type="evidence" value="ECO:0000250"/>
    <property type="project" value="UniProtKB"/>
</dbReference>
<dbReference type="GO" id="GO:0005794">
    <property type="term" value="C:Golgi apparatus"/>
    <property type="evidence" value="ECO:0000250"/>
    <property type="project" value="UniProtKB"/>
</dbReference>
<dbReference type="GO" id="GO:0000139">
    <property type="term" value="C:Golgi membrane"/>
    <property type="evidence" value="ECO:0007669"/>
    <property type="project" value="UniProtKB-SubCell"/>
</dbReference>
<dbReference type="GO" id="GO:0016020">
    <property type="term" value="C:membrane"/>
    <property type="evidence" value="ECO:0000250"/>
    <property type="project" value="UniProtKB"/>
</dbReference>
<dbReference type="GO" id="GO:0015095">
    <property type="term" value="F:magnesium ion transmembrane transporter activity"/>
    <property type="evidence" value="ECO:0000250"/>
    <property type="project" value="UniProtKB"/>
</dbReference>
<dbReference type="GO" id="GO:0015693">
    <property type="term" value="P:magnesium ion transport"/>
    <property type="evidence" value="ECO:0000250"/>
    <property type="project" value="UniProtKB"/>
</dbReference>
<dbReference type="GO" id="GO:0045050">
    <property type="term" value="P:protein insertion into ER membrane by stop-transfer membrane-anchor sequence"/>
    <property type="evidence" value="ECO:0000250"/>
    <property type="project" value="UniProtKB"/>
</dbReference>
<dbReference type="GO" id="GO:0071816">
    <property type="term" value="P:tail-anchored membrane protein insertion into ER membrane"/>
    <property type="evidence" value="ECO:0000250"/>
    <property type="project" value="UniProtKB"/>
</dbReference>
<dbReference type="InterPro" id="IPR018937">
    <property type="entry name" value="MMgT"/>
</dbReference>
<dbReference type="PANTHER" id="PTHR21181">
    <property type="match status" value="1"/>
</dbReference>
<dbReference type="PANTHER" id="PTHR21181:SF7">
    <property type="entry name" value="ER MEMBRANE PROTEIN COMPLEX SUBUNIT 5"/>
    <property type="match status" value="1"/>
</dbReference>
<dbReference type="Pfam" id="PF10270">
    <property type="entry name" value="MMgT"/>
    <property type="match status" value="1"/>
</dbReference>
<protein>
    <recommendedName>
        <fullName evidence="2">ER membrane protein complex subunit 5</fullName>
    </recommendedName>
    <alternativeName>
        <fullName evidence="1">Membrane magnesium transporter 1</fullName>
    </alternativeName>
</protein>
<feature type="chain" id="PRO_0000286441" description="ER membrane protein complex subunit 5">
    <location>
        <begin position="1"/>
        <end position="132"/>
    </location>
</feature>
<feature type="topological domain" description="Cytoplasmic" evidence="2">
    <location>
        <begin position="1"/>
        <end position="3"/>
    </location>
</feature>
<feature type="transmembrane region" description="Helical" evidence="2">
    <location>
        <begin position="4"/>
        <end position="22"/>
    </location>
</feature>
<feature type="topological domain" description="Lumenal" evidence="2">
    <location>
        <begin position="23"/>
        <end position="43"/>
    </location>
</feature>
<feature type="transmembrane region" description="Helical" evidence="2">
    <location>
        <begin position="44"/>
        <end position="63"/>
    </location>
</feature>
<feature type="topological domain" description="Cytoplasmic" evidence="2">
    <location>
        <begin position="64"/>
        <end position="132"/>
    </location>
</feature>
<comment type="function">
    <text evidence="1 2">Part of the endoplasmic reticulum membrane protein complex (EMC) that enables the energy-independent insertion into endoplasmic reticulum membranes of newly synthesized membrane proteins. Preferentially accommodates proteins with transmembrane domains that are weakly hydrophobic or contain destabilizing features such as charged and aromatic residues. Involved in the cotranslational insertion of multi-pass membrane proteins in which stop-transfer membrane-anchor sequences become ER membrane spanning helices. It is also required for the post-translational insertion of tail-anchored/TA proteins in endoplasmic reticulum membranes. By mediating the proper cotranslational insertion of N-terminal transmembrane domains in an N-exo topology, with translocated N-terminus in the lumen of the ER, controls the topology of multi-pass membrane proteins like the G protein-coupled receptors (By similarity). By regulating the insertion of various proteins in membranes, it is indirectly involved in many cellular processes. May be involved in Mg(2+) transport (By similarity).</text>
</comment>
<comment type="subunit">
    <text evidence="2">Component of the ER membrane protein complex (EMC).</text>
</comment>
<comment type="subcellular location">
    <subcellularLocation>
        <location evidence="2">Endoplasmic reticulum membrane</location>
        <topology evidence="2">Multi-pass membrane protein</topology>
    </subcellularLocation>
    <subcellularLocation>
        <location evidence="1">Golgi apparatus membrane</location>
        <topology evidence="2">Multi-pass membrane protein</topology>
    </subcellularLocation>
    <subcellularLocation>
        <location evidence="1">Early endosome membrane</location>
        <topology evidence="2">Multi-pass membrane protein</topology>
    </subcellularLocation>
</comment>
<comment type="similarity">
    <text evidence="3">Belongs to the membrane magnesium transporter (TC 1.A.67) family.</text>
</comment>
<accession>Q28HV5</accession>
<accession>B3DL23</accession>
<organism>
    <name type="scientific">Xenopus tropicalis</name>
    <name type="common">Western clawed frog</name>
    <name type="synonym">Silurana tropicalis</name>
    <dbReference type="NCBI Taxonomy" id="8364"/>
    <lineage>
        <taxon>Eukaryota</taxon>
        <taxon>Metazoa</taxon>
        <taxon>Chordata</taxon>
        <taxon>Craniata</taxon>
        <taxon>Vertebrata</taxon>
        <taxon>Euteleostomi</taxon>
        <taxon>Amphibia</taxon>
        <taxon>Batrachia</taxon>
        <taxon>Anura</taxon>
        <taxon>Pipoidea</taxon>
        <taxon>Pipidae</taxon>
        <taxon>Xenopodinae</taxon>
        <taxon>Xenopus</taxon>
        <taxon>Silurana</taxon>
    </lineage>
</organism>
<sequence length="132" mass="14942">MASSIWKGLVGIGLFALAHAAFSAAQHRSYMRLTEKEDETLPIDIVLQTLLAFIVACYGIVHIAGEFKDMDATSELRNKTFDTLRNHPSFYVFNHRGRVMFQPPESEDCHRIQAPFSSNSSLKLSKLESMHR</sequence>
<name>EMC5_XENTR</name>
<keyword id="KW-0256">Endoplasmic reticulum</keyword>
<keyword id="KW-0967">Endosome</keyword>
<keyword id="KW-0333">Golgi apparatus</keyword>
<keyword id="KW-0460">Magnesium</keyword>
<keyword id="KW-0472">Membrane</keyword>
<keyword id="KW-1185">Reference proteome</keyword>
<keyword id="KW-0812">Transmembrane</keyword>
<keyword id="KW-1133">Transmembrane helix</keyword>
<keyword id="KW-0813">Transport</keyword>
<reference key="1">
    <citation type="submission" date="2006-10" db="EMBL/GenBank/DDBJ databases">
        <authorList>
            <consortium name="Sanger Xenopus tropicalis EST/cDNA project"/>
        </authorList>
    </citation>
    <scope>NUCLEOTIDE SEQUENCE [LARGE SCALE MRNA]</scope>
    <source>
        <tissue>Egg</tissue>
    </source>
</reference>
<reference key="2">
    <citation type="submission" date="2008-06" db="EMBL/GenBank/DDBJ databases">
        <authorList>
            <consortium name="NIH - Xenopus Gene Collection (XGC) project"/>
        </authorList>
    </citation>
    <scope>NUCLEOTIDE SEQUENCE [LARGE SCALE MRNA]</scope>
    <source>
        <tissue>Embryo</tissue>
    </source>
</reference>
<gene>
    <name evidence="1" type="primary">mmgt1</name>
    <name evidence="2" type="synonym">emc5</name>
    <name type="ORF">TEgg056o02.1</name>
</gene>
<proteinExistence type="evidence at transcript level"/>
<evidence type="ECO:0000250" key="1">
    <source>
        <dbReference type="UniProtKB" id="Q8K273"/>
    </source>
</evidence>
<evidence type="ECO:0000250" key="2">
    <source>
        <dbReference type="UniProtKB" id="Q8N4V1"/>
    </source>
</evidence>
<evidence type="ECO:0000305" key="3"/>